<keyword id="KW-0010">Activator</keyword>
<keyword id="KW-0238">DNA-binding</keyword>
<keyword id="KW-0539">Nucleus</keyword>
<keyword id="KW-1185">Reference proteome</keyword>
<keyword id="KW-0804">Transcription</keyword>
<keyword id="KW-0805">Transcription regulation</keyword>
<evidence type="ECO:0000250" key="1"/>
<evidence type="ECO:0000255" key="2">
    <source>
        <dbReference type="PROSITE-ProRule" id="PRU00089"/>
    </source>
</evidence>
<evidence type="ECO:0000256" key="3">
    <source>
        <dbReference type="SAM" id="MobiDB-lite"/>
    </source>
</evidence>
<evidence type="ECO:0000269" key="4">
    <source>
    </source>
</evidence>
<evidence type="ECO:0000305" key="5"/>
<evidence type="ECO:0000312" key="6">
    <source>
        <dbReference type="EMBL" id="AAH96623.1"/>
    </source>
</evidence>
<evidence type="ECO:0000312" key="7">
    <source>
        <dbReference type="EMBL" id="AAY79175.1"/>
    </source>
</evidence>
<evidence type="ECO:0000312" key="8">
    <source>
        <dbReference type="EMBL" id="BAC32291.1"/>
    </source>
</evidence>
<evidence type="ECO:0000312" key="9">
    <source>
        <dbReference type="MGI" id="MGI:3028075"/>
    </source>
</evidence>
<name>FOXI2_MOUSE</name>
<accession>Q3I5G5</accession>
<accession>Q8BIK9</accession>
<dbReference type="EMBL" id="DQ078268">
    <property type="protein sequence ID" value="AAY79175.1"/>
    <property type="molecule type" value="mRNA"/>
</dbReference>
<dbReference type="EMBL" id="AK045276">
    <property type="protein sequence ID" value="BAC32291.1"/>
    <property type="status" value="ALT_INIT"/>
    <property type="molecule type" value="mRNA"/>
</dbReference>
<dbReference type="EMBL" id="BC096623">
    <property type="protein sequence ID" value="AAH96623.1"/>
    <property type="status" value="ALT_INIT"/>
    <property type="molecule type" value="mRNA"/>
</dbReference>
<dbReference type="CCDS" id="CCDS21942.2"/>
<dbReference type="RefSeq" id="NP_899016.2">
    <property type="nucleotide sequence ID" value="NM_183193.3"/>
</dbReference>
<dbReference type="SMR" id="Q3I5G5"/>
<dbReference type="FunCoup" id="Q3I5G5">
    <property type="interactions" value="1"/>
</dbReference>
<dbReference type="STRING" id="10090.ENSMUSP00000159111"/>
<dbReference type="GlyGen" id="Q3I5G5">
    <property type="glycosylation" value="1 site"/>
</dbReference>
<dbReference type="PhosphoSitePlus" id="Q3I5G5"/>
<dbReference type="PaxDb" id="10090-ENSMUSP00000053641"/>
<dbReference type="ABCD" id="Q3I5G5">
    <property type="antibodies" value="1 sequenced antibody"/>
</dbReference>
<dbReference type="Antibodypedia" id="32477">
    <property type="antibodies" value="70 antibodies from 16 providers"/>
</dbReference>
<dbReference type="DNASU" id="270004"/>
<dbReference type="Ensembl" id="ENSMUST00000060356.8">
    <property type="protein sequence ID" value="ENSMUSP00000053641.7"/>
    <property type="gene ID" value="ENSMUSG00000048377.8"/>
</dbReference>
<dbReference type="GeneID" id="270004"/>
<dbReference type="KEGG" id="mmu:270004"/>
<dbReference type="AGR" id="MGI:3028075"/>
<dbReference type="CTD" id="399823"/>
<dbReference type="MGI" id="MGI:3028075">
    <property type="gene designation" value="Foxi2"/>
</dbReference>
<dbReference type="VEuPathDB" id="HostDB:ENSMUSG00000048377"/>
<dbReference type="eggNOG" id="KOG2294">
    <property type="taxonomic scope" value="Eukaryota"/>
</dbReference>
<dbReference type="GeneTree" id="ENSGT00940000161176"/>
<dbReference type="InParanoid" id="Q3I5G5"/>
<dbReference type="OrthoDB" id="5954824at2759"/>
<dbReference type="PhylomeDB" id="Q3I5G5"/>
<dbReference type="BioGRID-ORCS" id="270004">
    <property type="hits" value="2 hits in 76 CRISPR screens"/>
</dbReference>
<dbReference type="PRO" id="PR:Q3I5G5"/>
<dbReference type="Proteomes" id="UP000000589">
    <property type="component" value="Chromosome 7"/>
</dbReference>
<dbReference type="RNAct" id="Q3I5G5">
    <property type="molecule type" value="protein"/>
</dbReference>
<dbReference type="Bgee" id="ENSMUSG00000048377">
    <property type="expression patterns" value="Expressed in perihilar interstitium and 57 other cell types or tissues"/>
</dbReference>
<dbReference type="ExpressionAtlas" id="Q3I5G5">
    <property type="expression patterns" value="baseline and differential"/>
</dbReference>
<dbReference type="GO" id="GO:0005634">
    <property type="term" value="C:nucleus"/>
    <property type="evidence" value="ECO:0000250"/>
    <property type="project" value="UniProtKB"/>
</dbReference>
<dbReference type="GO" id="GO:0003700">
    <property type="term" value="F:DNA-binding transcription factor activity"/>
    <property type="evidence" value="ECO:0007669"/>
    <property type="project" value="InterPro"/>
</dbReference>
<dbReference type="GO" id="GO:0043565">
    <property type="term" value="F:sequence-specific DNA binding"/>
    <property type="evidence" value="ECO:0007669"/>
    <property type="project" value="InterPro"/>
</dbReference>
<dbReference type="FunFam" id="1.10.10.10:FF:000016">
    <property type="entry name" value="Forkhead box protein I1"/>
    <property type="match status" value="1"/>
</dbReference>
<dbReference type="Gene3D" id="1.10.10.10">
    <property type="entry name" value="Winged helix-like DNA-binding domain superfamily/Winged helix DNA-binding domain"/>
    <property type="match status" value="1"/>
</dbReference>
<dbReference type="InterPro" id="IPR001766">
    <property type="entry name" value="Fork_head_dom"/>
</dbReference>
<dbReference type="InterPro" id="IPR050211">
    <property type="entry name" value="FOX_domain-containing"/>
</dbReference>
<dbReference type="InterPro" id="IPR018122">
    <property type="entry name" value="TF_fork_head_CS_1"/>
</dbReference>
<dbReference type="InterPro" id="IPR030456">
    <property type="entry name" value="TF_fork_head_CS_2"/>
</dbReference>
<dbReference type="InterPro" id="IPR036388">
    <property type="entry name" value="WH-like_DNA-bd_sf"/>
</dbReference>
<dbReference type="InterPro" id="IPR036390">
    <property type="entry name" value="WH_DNA-bd_sf"/>
</dbReference>
<dbReference type="PANTHER" id="PTHR11829">
    <property type="entry name" value="FORKHEAD BOX PROTEIN"/>
    <property type="match status" value="1"/>
</dbReference>
<dbReference type="PANTHER" id="PTHR11829:SF372">
    <property type="entry name" value="FORKHEAD BOX PROTEIN I2"/>
    <property type="match status" value="1"/>
</dbReference>
<dbReference type="Pfam" id="PF00250">
    <property type="entry name" value="Forkhead"/>
    <property type="match status" value="1"/>
</dbReference>
<dbReference type="PRINTS" id="PR00053">
    <property type="entry name" value="FORKHEAD"/>
</dbReference>
<dbReference type="SMART" id="SM00339">
    <property type="entry name" value="FH"/>
    <property type="match status" value="1"/>
</dbReference>
<dbReference type="SUPFAM" id="SSF46785">
    <property type="entry name" value="Winged helix' DNA-binding domain"/>
    <property type="match status" value="1"/>
</dbReference>
<dbReference type="PROSITE" id="PS00657">
    <property type="entry name" value="FORK_HEAD_1"/>
    <property type="match status" value="1"/>
</dbReference>
<dbReference type="PROSITE" id="PS00658">
    <property type="entry name" value="FORK_HEAD_2"/>
    <property type="match status" value="1"/>
</dbReference>
<dbReference type="PROSITE" id="PS50039">
    <property type="entry name" value="FORK_HEAD_3"/>
    <property type="match status" value="1"/>
</dbReference>
<gene>
    <name evidence="9" type="primary">Foxi2</name>
</gene>
<comment type="function">
    <text evidence="1">Possible transcriptional activator.</text>
</comment>
<comment type="subcellular location">
    <subcellularLocation>
        <location>Nucleus</location>
    </subcellularLocation>
</comment>
<comment type="developmental stage">
    <text evidence="4">Expressed in a subset of cells of the olfactory epithelium, in the dental epithelium, in developing whiskers and in cells lining the endolymphatic duct of the inner ear at stage 16.5 dpc. Also expressed in kidney, hair follicles, thymus and in collecting ducts from the mandibular gland as well as in a subset of epithelial cells lining the sublingual and submaxillary ducts from the salivary glands to the oral cavity at stage 18.5 dpc. Expressed in the developing brain along a neuromeric boundary between prosomeres p5 and p6 as well as in the neural layer of the retina.</text>
</comment>
<comment type="sequence caution" evidence="5">
    <conflict type="erroneous initiation">
        <sequence resource="EMBL-CDS" id="AAH96623"/>
    </conflict>
</comment>
<comment type="sequence caution" evidence="5">
    <conflict type="erroneous initiation">
        <sequence resource="EMBL-CDS" id="BAC32291"/>
    </conflict>
</comment>
<reference evidence="5 7" key="1">
    <citation type="journal article" date="2005" name="Biochim. Biophys. Acta">
        <title>Cloning and analysis of the murine Foxi2 transcription factor.</title>
        <authorList>
            <person name="Wijchers P.J.E.C."/>
            <person name="Hoekman M.F.M."/>
            <person name="Burbach J.P.H."/>
            <person name="Smidt M.P."/>
        </authorList>
    </citation>
    <scope>NUCLEOTIDE SEQUENCE [MRNA]</scope>
    <scope>DEVELOPMENTAL STAGE</scope>
    <source>
        <strain evidence="7">C57BL/6J</strain>
        <tissue evidence="7">Midbrain</tissue>
    </source>
</reference>
<reference evidence="8" key="2">
    <citation type="journal article" date="2005" name="Science">
        <title>The transcriptional landscape of the mammalian genome.</title>
        <authorList>
            <person name="Carninci P."/>
            <person name="Kasukawa T."/>
            <person name="Katayama S."/>
            <person name="Gough J."/>
            <person name="Frith M.C."/>
            <person name="Maeda N."/>
            <person name="Oyama R."/>
            <person name="Ravasi T."/>
            <person name="Lenhard B."/>
            <person name="Wells C."/>
            <person name="Kodzius R."/>
            <person name="Shimokawa K."/>
            <person name="Bajic V.B."/>
            <person name="Brenner S.E."/>
            <person name="Batalov S."/>
            <person name="Forrest A.R."/>
            <person name="Zavolan M."/>
            <person name="Davis M.J."/>
            <person name="Wilming L.G."/>
            <person name="Aidinis V."/>
            <person name="Allen J.E."/>
            <person name="Ambesi-Impiombato A."/>
            <person name="Apweiler R."/>
            <person name="Aturaliya R.N."/>
            <person name="Bailey T.L."/>
            <person name="Bansal M."/>
            <person name="Baxter L."/>
            <person name="Beisel K.W."/>
            <person name="Bersano T."/>
            <person name="Bono H."/>
            <person name="Chalk A.M."/>
            <person name="Chiu K.P."/>
            <person name="Choudhary V."/>
            <person name="Christoffels A."/>
            <person name="Clutterbuck D.R."/>
            <person name="Crowe M.L."/>
            <person name="Dalla E."/>
            <person name="Dalrymple B.P."/>
            <person name="de Bono B."/>
            <person name="Della Gatta G."/>
            <person name="di Bernardo D."/>
            <person name="Down T."/>
            <person name="Engstrom P."/>
            <person name="Fagiolini M."/>
            <person name="Faulkner G."/>
            <person name="Fletcher C.F."/>
            <person name="Fukushima T."/>
            <person name="Furuno M."/>
            <person name="Futaki S."/>
            <person name="Gariboldi M."/>
            <person name="Georgii-Hemming P."/>
            <person name="Gingeras T.R."/>
            <person name="Gojobori T."/>
            <person name="Green R.E."/>
            <person name="Gustincich S."/>
            <person name="Harbers M."/>
            <person name="Hayashi Y."/>
            <person name="Hensch T.K."/>
            <person name="Hirokawa N."/>
            <person name="Hill D."/>
            <person name="Huminiecki L."/>
            <person name="Iacono M."/>
            <person name="Ikeo K."/>
            <person name="Iwama A."/>
            <person name="Ishikawa T."/>
            <person name="Jakt M."/>
            <person name="Kanapin A."/>
            <person name="Katoh M."/>
            <person name="Kawasawa Y."/>
            <person name="Kelso J."/>
            <person name="Kitamura H."/>
            <person name="Kitano H."/>
            <person name="Kollias G."/>
            <person name="Krishnan S.P."/>
            <person name="Kruger A."/>
            <person name="Kummerfeld S.K."/>
            <person name="Kurochkin I.V."/>
            <person name="Lareau L.F."/>
            <person name="Lazarevic D."/>
            <person name="Lipovich L."/>
            <person name="Liu J."/>
            <person name="Liuni S."/>
            <person name="McWilliam S."/>
            <person name="Madan Babu M."/>
            <person name="Madera M."/>
            <person name="Marchionni L."/>
            <person name="Matsuda H."/>
            <person name="Matsuzawa S."/>
            <person name="Miki H."/>
            <person name="Mignone F."/>
            <person name="Miyake S."/>
            <person name="Morris K."/>
            <person name="Mottagui-Tabar S."/>
            <person name="Mulder N."/>
            <person name="Nakano N."/>
            <person name="Nakauchi H."/>
            <person name="Ng P."/>
            <person name="Nilsson R."/>
            <person name="Nishiguchi S."/>
            <person name="Nishikawa S."/>
            <person name="Nori F."/>
            <person name="Ohara O."/>
            <person name="Okazaki Y."/>
            <person name="Orlando V."/>
            <person name="Pang K.C."/>
            <person name="Pavan W.J."/>
            <person name="Pavesi G."/>
            <person name="Pesole G."/>
            <person name="Petrovsky N."/>
            <person name="Piazza S."/>
            <person name="Reed J."/>
            <person name="Reid J.F."/>
            <person name="Ring B.Z."/>
            <person name="Ringwald M."/>
            <person name="Rost B."/>
            <person name="Ruan Y."/>
            <person name="Salzberg S.L."/>
            <person name="Sandelin A."/>
            <person name="Schneider C."/>
            <person name="Schoenbach C."/>
            <person name="Sekiguchi K."/>
            <person name="Semple C.A."/>
            <person name="Seno S."/>
            <person name="Sessa L."/>
            <person name="Sheng Y."/>
            <person name="Shibata Y."/>
            <person name="Shimada H."/>
            <person name="Shimada K."/>
            <person name="Silva D."/>
            <person name="Sinclair B."/>
            <person name="Sperling S."/>
            <person name="Stupka E."/>
            <person name="Sugiura K."/>
            <person name="Sultana R."/>
            <person name="Takenaka Y."/>
            <person name="Taki K."/>
            <person name="Tammoja K."/>
            <person name="Tan S.L."/>
            <person name="Tang S."/>
            <person name="Taylor M.S."/>
            <person name="Tegner J."/>
            <person name="Teichmann S.A."/>
            <person name="Ueda H.R."/>
            <person name="van Nimwegen E."/>
            <person name="Verardo R."/>
            <person name="Wei C.L."/>
            <person name="Yagi K."/>
            <person name="Yamanishi H."/>
            <person name="Zabarovsky E."/>
            <person name="Zhu S."/>
            <person name="Zimmer A."/>
            <person name="Hide W."/>
            <person name="Bult C."/>
            <person name="Grimmond S.M."/>
            <person name="Teasdale R.D."/>
            <person name="Liu E.T."/>
            <person name="Brusic V."/>
            <person name="Quackenbush J."/>
            <person name="Wahlestedt C."/>
            <person name="Mattick J.S."/>
            <person name="Hume D.A."/>
            <person name="Kai C."/>
            <person name="Sasaki D."/>
            <person name="Tomaru Y."/>
            <person name="Fukuda S."/>
            <person name="Kanamori-Katayama M."/>
            <person name="Suzuki M."/>
            <person name="Aoki J."/>
            <person name="Arakawa T."/>
            <person name="Iida J."/>
            <person name="Imamura K."/>
            <person name="Itoh M."/>
            <person name="Kato T."/>
            <person name="Kawaji H."/>
            <person name="Kawagashira N."/>
            <person name="Kawashima T."/>
            <person name="Kojima M."/>
            <person name="Kondo S."/>
            <person name="Konno H."/>
            <person name="Nakano K."/>
            <person name="Ninomiya N."/>
            <person name="Nishio T."/>
            <person name="Okada M."/>
            <person name="Plessy C."/>
            <person name="Shibata K."/>
            <person name="Shiraki T."/>
            <person name="Suzuki S."/>
            <person name="Tagami M."/>
            <person name="Waki K."/>
            <person name="Watahiki A."/>
            <person name="Okamura-Oho Y."/>
            <person name="Suzuki H."/>
            <person name="Kawai J."/>
            <person name="Hayashizaki Y."/>
        </authorList>
    </citation>
    <scope>NUCLEOTIDE SEQUENCE [LARGE SCALE MRNA]</scope>
    <source>
        <strain evidence="8">C57BL/6J</strain>
        <tissue evidence="8">Embryo</tissue>
    </source>
</reference>
<reference evidence="6" key="3">
    <citation type="journal article" date="2004" name="Genome Res.">
        <title>The status, quality, and expansion of the NIH full-length cDNA project: the Mammalian Gene Collection (MGC).</title>
        <authorList>
            <consortium name="The MGC Project Team"/>
        </authorList>
    </citation>
    <scope>NUCLEOTIDE SEQUENCE [LARGE SCALE MRNA]</scope>
    <source>
        <strain evidence="6">C57BL/6J</strain>
        <tissue evidence="6">Embryo</tissue>
    </source>
</reference>
<organism>
    <name type="scientific">Mus musculus</name>
    <name type="common">Mouse</name>
    <dbReference type="NCBI Taxonomy" id="10090"/>
    <lineage>
        <taxon>Eukaryota</taxon>
        <taxon>Metazoa</taxon>
        <taxon>Chordata</taxon>
        <taxon>Craniata</taxon>
        <taxon>Vertebrata</taxon>
        <taxon>Euteleostomi</taxon>
        <taxon>Mammalia</taxon>
        <taxon>Eutheria</taxon>
        <taxon>Euarchontoglires</taxon>
        <taxon>Glires</taxon>
        <taxon>Rodentia</taxon>
        <taxon>Myomorpha</taxon>
        <taxon>Muroidea</taxon>
        <taxon>Muridae</taxon>
        <taxon>Murinae</taxon>
        <taxon>Mus</taxon>
        <taxon>Mus</taxon>
    </lineage>
</organism>
<protein>
    <recommendedName>
        <fullName>Forkhead box protein I2</fullName>
    </recommendedName>
</protein>
<sequence length="311" mass="32784">MAGFCDSLGSCSVPHGLTRAIAHPPSYGRTDLSSGRRLWVNSAALSPAPYATGPGPAPSYAAATLAVPGSLLGASGGLAGADLAWLSLSGQQELLRLVRPPYSYSALIAMAIQSAPLRRLTLSQIYQYVAGNFPFYKRSKAGWQNSIRHNLSLNDCFKKVPRDENDPGKGNYWTLDPNCEKMFDNGNFRRKRRRRGETSEAAVPGASSPEGTALEPRGSTPQDPQTSPSPSEATTTCLSGFSTAMGALAGGFGALPDGLAHDFSLRRPPPTAAAHSPQIPNTAPGFAPGHQTGATGFRMGHLIYSRDGTEV</sequence>
<feature type="chain" id="PRO_0000091848" description="Forkhead box protein I2">
    <location>
        <begin position="1"/>
        <end position="311"/>
    </location>
</feature>
<feature type="DNA-binding region" description="Fork-head" evidence="2">
    <location>
        <begin position="99"/>
        <end position="193"/>
    </location>
</feature>
<feature type="region of interest" description="Disordered" evidence="3">
    <location>
        <begin position="188"/>
        <end position="237"/>
    </location>
</feature>
<feature type="region of interest" description="Disordered" evidence="3">
    <location>
        <begin position="263"/>
        <end position="294"/>
    </location>
</feature>
<feature type="compositionally biased region" description="Low complexity" evidence="3">
    <location>
        <begin position="219"/>
        <end position="231"/>
    </location>
</feature>
<proteinExistence type="evidence at transcript level"/>